<gene>
    <name evidence="1" type="primary">lpxD</name>
    <name type="ordered locus">PCC8801_1516</name>
</gene>
<sequence>MKFNEISEKLSPLVTNSSLTTHPDLNPDITAVAAVDEAVTGQLSYIEGGKFAAMVQKTAASALILPRDEALQAQATEKDIAWITTPEPRLLFAHAIKLFYQPFHPSPGIHPTAVIDSSVKLGKDIYIGPHVVIEQGVTIGDNACIHANVVIYPGVSIGDRTILHANCTIHERSQIGDNCVIHSGAAIGSEGFGFVPTPDGWFKMEQSGYVVLEDGVEIGCNSAVDRPAVGTTRVGRNTKIDNLVQVAHNCQISENCVFASQVGLAGGVKVGKRVILAGQVGVANQANIGDGVIASAQTGIPHDIAPGEIVSSSPAVPNKLYLKASAIYKRLPEMYQTLKRLQKKLEES</sequence>
<name>LPXD_RIPO1</name>
<evidence type="ECO:0000255" key="1">
    <source>
        <dbReference type="HAMAP-Rule" id="MF_00523"/>
    </source>
</evidence>
<reference key="1">
    <citation type="journal article" date="2011" name="MBio">
        <title>Novel metabolic attributes of the genus Cyanothece, comprising a group of unicellular nitrogen-fixing Cyanobacteria.</title>
        <authorList>
            <person name="Bandyopadhyay A."/>
            <person name="Elvitigala T."/>
            <person name="Welsh E."/>
            <person name="Stockel J."/>
            <person name="Liberton M."/>
            <person name="Min H."/>
            <person name="Sherman L.A."/>
            <person name="Pakrasi H.B."/>
        </authorList>
    </citation>
    <scope>NUCLEOTIDE SEQUENCE [LARGE SCALE GENOMIC DNA]</scope>
    <source>
        <strain>PCC 8801 / RF-1</strain>
    </source>
</reference>
<protein>
    <recommendedName>
        <fullName evidence="1">UDP-3-O-acylglucosamine N-acyltransferase</fullName>
        <ecNumber evidence="1">2.3.1.191</ecNumber>
    </recommendedName>
</protein>
<dbReference type="EC" id="2.3.1.191" evidence="1"/>
<dbReference type="EMBL" id="CP001287">
    <property type="protein sequence ID" value="ACK65571.1"/>
    <property type="molecule type" value="Genomic_DNA"/>
</dbReference>
<dbReference type="RefSeq" id="WP_012594844.1">
    <property type="nucleotide sequence ID" value="NC_011726.1"/>
</dbReference>
<dbReference type="SMR" id="B7JUM7"/>
<dbReference type="STRING" id="41431.PCC8801_1516"/>
<dbReference type="KEGG" id="cyp:PCC8801_1516"/>
<dbReference type="eggNOG" id="COG1044">
    <property type="taxonomic scope" value="Bacteria"/>
</dbReference>
<dbReference type="HOGENOM" id="CLU_049865_0_0_3"/>
<dbReference type="OrthoDB" id="9784739at2"/>
<dbReference type="UniPathway" id="UPA00973"/>
<dbReference type="Proteomes" id="UP000008204">
    <property type="component" value="Chromosome"/>
</dbReference>
<dbReference type="GO" id="GO:0031470">
    <property type="term" value="C:carboxysome"/>
    <property type="evidence" value="ECO:0007669"/>
    <property type="project" value="UniProtKB-ARBA"/>
</dbReference>
<dbReference type="GO" id="GO:0016020">
    <property type="term" value="C:membrane"/>
    <property type="evidence" value="ECO:0007669"/>
    <property type="project" value="GOC"/>
</dbReference>
<dbReference type="GO" id="GO:0016410">
    <property type="term" value="F:N-acyltransferase activity"/>
    <property type="evidence" value="ECO:0007669"/>
    <property type="project" value="InterPro"/>
</dbReference>
<dbReference type="GO" id="GO:0043886">
    <property type="term" value="F:structural constituent of carboxysome shell"/>
    <property type="evidence" value="ECO:0007669"/>
    <property type="project" value="UniProtKB-ARBA"/>
</dbReference>
<dbReference type="GO" id="GO:0009245">
    <property type="term" value="P:lipid A biosynthetic process"/>
    <property type="evidence" value="ECO:0007669"/>
    <property type="project" value="UniProtKB-UniRule"/>
</dbReference>
<dbReference type="CDD" id="cd03352">
    <property type="entry name" value="LbH_LpxD"/>
    <property type="match status" value="1"/>
</dbReference>
<dbReference type="Gene3D" id="2.160.10.10">
    <property type="entry name" value="Hexapeptide repeat proteins"/>
    <property type="match status" value="1"/>
</dbReference>
<dbReference type="Gene3D" id="3.40.1390.10">
    <property type="entry name" value="MurE/MurF, N-terminal domain"/>
    <property type="match status" value="1"/>
</dbReference>
<dbReference type="HAMAP" id="MF_00523">
    <property type="entry name" value="LpxD"/>
    <property type="match status" value="1"/>
</dbReference>
<dbReference type="InterPro" id="IPR001451">
    <property type="entry name" value="Hexapep"/>
</dbReference>
<dbReference type="InterPro" id="IPR007691">
    <property type="entry name" value="LpxD"/>
</dbReference>
<dbReference type="InterPro" id="IPR011004">
    <property type="entry name" value="Trimer_LpxA-like_sf"/>
</dbReference>
<dbReference type="InterPro" id="IPR020573">
    <property type="entry name" value="UDP_GlcNAc_AcTrfase_non-rep"/>
</dbReference>
<dbReference type="NCBIfam" id="TIGR01853">
    <property type="entry name" value="lipid_A_lpxD"/>
    <property type="match status" value="1"/>
</dbReference>
<dbReference type="NCBIfam" id="NF002060">
    <property type="entry name" value="PRK00892.1"/>
    <property type="match status" value="1"/>
</dbReference>
<dbReference type="PANTHER" id="PTHR43378">
    <property type="entry name" value="UDP-3-O-ACYLGLUCOSAMINE N-ACYLTRANSFERASE"/>
    <property type="match status" value="1"/>
</dbReference>
<dbReference type="PANTHER" id="PTHR43378:SF2">
    <property type="entry name" value="UDP-3-O-ACYLGLUCOSAMINE N-ACYLTRANSFERASE 1, MITOCHONDRIAL-RELATED"/>
    <property type="match status" value="1"/>
</dbReference>
<dbReference type="Pfam" id="PF00132">
    <property type="entry name" value="Hexapep"/>
    <property type="match status" value="2"/>
</dbReference>
<dbReference type="Pfam" id="PF04613">
    <property type="entry name" value="LpxD"/>
    <property type="match status" value="1"/>
</dbReference>
<dbReference type="SUPFAM" id="SSF51161">
    <property type="entry name" value="Trimeric LpxA-like enzymes"/>
    <property type="match status" value="1"/>
</dbReference>
<dbReference type="PROSITE" id="PS00101">
    <property type="entry name" value="HEXAPEP_TRANSFERASES"/>
    <property type="match status" value="1"/>
</dbReference>
<comment type="function">
    <text evidence="1">Catalyzes the N-acylation of UDP-3-O-acylglucosamine using 3-hydroxyacyl-ACP as the acyl donor. Is involved in the biosynthesis of lipid A, a phosphorylated glycolipid that anchors the lipopolysaccharide to the outer membrane of the cell.</text>
</comment>
<comment type="catalytic activity">
    <reaction evidence="1">
        <text>a UDP-3-O-[(3R)-3-hydroxyacyl]-alpha-D-glucosamine + a (3R)-hydroxyacyl-[ACP] = a UDP-2-N,3-O-bis[(3R)-3-hydroxyacyl]-alpha-D-glucosamine + holo-[ACP] + H(+)</text>
        <dbReference type="Rhea" id="RHEA:53836"/>
        <dbReference type="Rhea" id="RHEA-COMP:9685"/>
        <dbReference type="Rhea" id="RHEA-COMP:9945"/>
        <dbReference type="ChEBI" id="CHEBI:15378"/>
        <dbReference type="ChEBI" id="CHEBI:64479"/>
        <dbReference type="ChEBI" id="CHEBI:78827"/>
        <dbReference type="ChEBI" id="CHEBI:137740"/>
        <dbReference type="ChEBI" id="CHEBI:137748"/>
        <dbReference type="EC" id="2.3.1.191"/>
    </reaction>
</comment>
<comment type="pathway">
    <text evidence="1">Bacterial outer membrane biogenesis; LPS lipid A biosynthesis.</text>
</comment>
<comment type="subunit">
    <text evidence="1">Homotrimer.</text>
</comment>
<comment type="similarity">
    <text evidence="1">Belongs to the transferase hexapeptide repeat family. LpxD subfamily.</text>
</comment>
<accession>B7JUM7</accession>
<organism>
    <name type="scientific">Rippkaea orientalis (strain PCC 8801 / RF-1)</name>
    <name type="common">Cyanothece sp. (strain PCC 8801)</name>
    <dbReference type="NCBI Taxonomy" id="41431"/>
    <lineage>
        <taxon>Bacteria</taxon>
        <taxon>Bacillati</taxon>
        <taxon>Cyanobacteriota</taxon>
        <taxon>Cyanophyceae</taxon>
        <taxon>Oscillatoriophycideae</taxon>
        <taxon>Chroococcales</taxon>
        <taxon>Aphanothecaceae</taxon>
        <taxon>Rippkaea</taxon>
        <taxon>Rippkaea orientalis</taxon>
    </lineage>
</organism>
<keyword id="KW-0012">Acyltransferase</keyword>
<keyword id="KW-0441">Lipid A biosynthesis</keyword>
<keyword id="KW-0444">Lipid biosynthesis</keyword>
<keyword id="KW-0443">Lipid metabolism</keyword>
<keyword id="KW-1185">Reference proteome</keyword>
<keyword id="KW-0677">Repeat</keyword>
<keyword id="KW-0808">Transferase</keyword>
<proteinExistence type="inferred from homology"/>
<feature type="chain" id="PRO_1000127675" description="UDP-3-O-acylglucosamine N-acyltransferase">
    <location>
        <begin position="1"/>
        <end position="348"/>
    </location>
</feature>
<feature type="active site" description="Proton acceptor" evidence="1">
    <location>
        <position position="248"/>
    </location>
</feature>